<reference key="1">
    <citation type="submission" date="2007-09" db="EMBL/GenBank/DDBJ databases">
        <title>Complete genome sequence of Rickettsia canadensis.</title>
        <authorList>
            <person name="Madan A."/>
            <person name="Fahey J."/>
            <person name="Helton E."/>
            <person name="Ketteman M."/>
            <person name="Madan A."/>
            <person name="Rodrigues S."/>
            <person name="Sanchez A."/>
            <person name="Whiting M."/>
            <person name="Dasch G."/>
            <person name="Eremeeva M."/>
        </authorList>
    </citation>
    <scope>NUCLEOTIDE SEQUENCE [LARGE SCALE GENOMIC DNA]</scope>
    <source>
        <strain>McKiel</strain>
    </source>
</reference>
<organism>
    <name type="scientific">Rickettsia canadensis (strain McKiel)</name>
    <dbReference type="NCBI Taxonomy" id="293613"/>
    <lineage>
        <taxon>Bacteria</taxon>
        <taxon>Pseudomonadati</taxon>
        <taxon>Pseudomonadota</taxon>
        <taxon>Alphaproteobacteria</taxon>
        <taxon>Rickettsiales</taxon>
        <taxon>Rickettsiaceae</taxon>
        <taxon>Rickettsieae</taxon>
        <taxon>Rickettsia</taxon>
        <taxon>belli group</taxon>
    </lineage>
</organism>
<proteinExistence type="inferred from homology"/>
<feature type="chain" id="PRO_1000018771" description="Phosphoribosylaminoimidazole-succinocarboxamide synthase">
    <location>
        <begin position="1"/>
        <end position="236"/>
    </location>
</feature>
<accession>A8EXW3</accession>
<keyword id="KW-0067">ATP-binding</keyword>
<keyword id="KW-0436">Ligase</keyword>
<keyword id="KW-0547">Nucleotide-binding</keyword>
<keyword id="KW-0658">Purine biosynthesis</keyword>
<name>PUR7_RICCK</name>
<dbReference type="EC" id="6.3.2.6" evidence="1"/>
<dbReference type="EMBL" id="CP000409">
    <property type="protein sequence ID" value="ABV73196.1"/>
    <property type="molecule type" value="Genomic_DNA"/>
</dbReference>
<dbReference type="RefSeq" id="WP_001911859.1">
    <property type="nucleotide sequence ID" value="NC_009879.1"/>
</dbReference>
<dbReference type="SMR" id="A8EXW3"/>
<dbReference type="STRING" id="293613.A1E_01255"/>
<dbReference type="KEGG" id="rcm:A1E_01255"/>
<dbReference type="eggNOG" id="COG0152">
    <property type="taxonomic scope" value="Bacteria"/>
</dbReference>
<dbReference type="HOGENOM" id="CLU_061495_2_0_5"/>
<dbReference type="UniPathway" id="UPA00074">
    <property type="reaction ID" value="UER00131"/>
</dbReference>
<dbReference type="Proteomes" id="UP000007056">
    <property type="component" value="Chromosome"/>
</dbReference>
<dbReference type="GO" id="GO:0005829">
    <property type="term" value="C:cytosol"/>
    <property type="evidence" value="ECO:0007669"/>
    <property type="project" value="TreeGrafter"/>
</dbReference>
<dbReference type="GO" id="GO:0005524">
    <property type="term" value="F:ATP binding"/>
    <property type="evidence" value="ECO:0007669"/>
    <property type="project" value="UniProtKB-KW"/>
</dbReference>
<dbReference type="GO" id="GO:0004639">
    <property type="term" value="F:phosphoribosylaminoimidazolesuccinocarboxamide synthase activity"/>
    <property type="evidence" value="ECO:0007669"/>
    <property type="project" value="UniProtKB-UniRule"/>
</dbReference>
<dbReference type="GO" id="GO:0006189">
    <property type="term" value="P:'de novo' IMP biosynthetic process"/>
    <property type="evidence" value="ECO:0007669"/>
    <property type="project" value="UniProtKB-UniRule"/>
</dbReference>
<dbReference type="GO" id="GO:0009236">
    <property type="term" value="P:cobalamin biosynthetic process"/>
    <property type="evidence" value="ECO:0007669"/>
    <property type="project" value="InterPro"/>
</dbReference>
<dbReference type="CDD" id="cd01415">
    <property type="entry name" value="SAICAR_synt_PurC"/>
    <property type="match status" value="1"/>
</dbReference>
<dbReference type="Gene3D" id="3.30.470.20">
    <property type="entry name" value="ATP-grasp fold, B domain"/>
    <property type="match status" value="1"/>
</dbReference>
<dbReference type="Gene3D" id="3.30.200.20">
    <property type="entry name" value="Phosphorylase Kinase, domain 1"/>
    <property type="match status" value="1"/>
</dbReference>
<dbReference type="HAMAP" id="MF_00137">
    <property type="entry name" value="SAICAR_synth"/>
    <property type="match status" value="1"/>
</dbReference>
<dbReference type="InterPro" id="IPR028923">
    <property type="entry name" value="SAICAR_synt/ADE2_N"/>
</dbReference>
<dbReference type="InterPro" id="IPR033934">
    <property type="entry name" value="SAICAR_synt_PurC"/>
</dbReference>
<dbReference type="InterPro" id="IPR050089">
    <property type="entry name" value="SAICAR_synthetase"/>
</dbReference>
<dbReference type="PANTHER" id="PTHR43599">
    <property type="entry name" value="MULTIFUNCTIONAL PROTEIN ADE2"/>
    <property type="match status" value="1"/>
</dbReference>
<dbReference type="PANTHER" id="PTHR43599:SF3">
    <property type="entry name" value="SI:DKEY-6E2.2"/>
    <property type="match status" value="1"/>
</dbReference>
<dbReference type="Pfam" id="PF01259">
    <property type="entry name" value="SAICAR_synt"/>
    <property type="match status" value="1"/>
</dbReference>
<dbReference type="SUPFAM" id="SSF56104">
    <property type="entry name" value="SAICAR synthase-like"/>
    <property type="match status" value="1"/>
</dbReference>
<comment type="catalytic activity">
    <reaction evidence="1">
        <text>5-amino-1-(5-phospho-D-ribosyl)imidazole-4-carboxylate + L-aspartate + ATP = (2S)-2-[5-amino-1-(5-phospho-beta-D-ribosyl)imidazole-4-carboxamido]succinate + ADP + phosphate + 2 H(+)</text>
        <dbReference type="Rhea" id="RHEA:22628"/>
        <dbReference type="ChEBI" id="CHEBI:15378"/>
        <dbReference type="ChEBI" id="CHEBI:29991"/>
        <dbReference type="ChEBI" id="CHEBI:30616"/>
        <dbReference type="ChEBI" id="CHEBI:43474"/>
        <dbReference type="ChEBI" id="CHEBI:58443"/>
        <dbReference type="ChEBI" id="CHEBI:77657"/>
        <dbReference type="ChEBI" id="CHEBI:456216"/>
        <dbReference type="EC" id="6.3.2.6"/>
    </reaction>
</comment>
<comment type="pathway">
    <text evidence="1">Purine metabolism; IMP biosynthesis via de novo pathway; 5-amino-1-(5-phospho-D-ribosyl)imidazole-4-carboxamide from 5-amino-1-(5-phospho-D-ribosyl)imidazole-4-carboxylate: step 1/2.</text>
</comment>
<comment type="similarity">
    <text evidence="1">Belongs to the SAICAR synthetase family.</text>
</comment>
<sequence length="236" mass="27280">MKKKLYEGSSKILYSAEEDFLLIMAFSDKAILETGKTVDISGKGVLNNNISSFLMDKLEMIGIANHFIEKINMREQLIQYVEVFPIQVIISSVACGRFVKEFGLDEGYVFDKPIMDFKVRSREFKYPIVNEYQILNFGWLTRDEITAVKEQALHIYDFLSGLFIGVGIRLVECKLEFGRVFNGEESIIMLTDEISPDNCRLWHINSNEKLGFELLENEPSKVFESYQLIAERLKEK</sequence>
<evidence type="ECO:0000255" key="1">
    <source>
        <dbReference type="HAMAP-Rule" id="MF_00137"/>
    </source>
</evidence>
<protein>
    <recommendedName>
        <fullName evidence="1">Phosphoribosylaminoimidazole-succinocarboxamide synthase</fullName>
        <ecNumber evidence="1">6.3.2.6</ecNumber>
    </recommendedName>
    <alternativeName>
        <fullName evidence="1">SAICAR synthetase</fullName>
    </alternativeName>
</protein>
<gene>
    <name evidence="1" type="primary">purC</name>
    <name type="ordered locus">A1E_01255</name>
</gene>